<feature type="chain" id="PRO_0000180251" description="Curamycin polyketide synthase acyl carrier protein">
    <location>
        <begin position="1"/>
        <end position="86"/>
    </location>
</feature>
<feature type="domain" description="Carrier" evidence="1">
    <location>
        <begin position="7"/>
        <end position="86"/>
    </location>
</feature>
<feature type="modified residue" description="O-(pantetheine 4'-phosphoryl)serine" evidence="1">
    <location>
        <position position="44"/>
    </location>
</feature>
<proteinExistence type="inferred from homology"/>
<gene>
    <name type="primary">curE</name>
</gene>
<name>ACPX_STRCN</name>
<protein>
    <recommendedName>
        <fullName>Curamycin polyketide synthase acyl carrier protein</fullName>
        <shortName>ACP</shortName>
    </recommendedName>
</protein>
<comment type="function">
    <text>Acyl carrier protein.</text>
</comment>
<comment type="pathway">
    <text>Antibiotic biosynthesis; curamycin biosynthesis.</text>
</comment>
<comment type="PTM">
    <text evidence="2">4'-phosphopantetheine is transferred from CoA to a specific serine of the apo-ACP-like protein.</text>
</comment>
<reference key="1">
    <citation type="journal article" date="1992" name="Gene">
        <title>Analysis of a polyketide synthesis-encoding gene cluster of Streptomyces curacoi.</title>
        <authorList>
            <person name="Bergh S."/>
            <person name="Uhlen M."/>
        </authorList>
    </citation>
    <scope>NUCLEOTIDE SEQUENCE [GENOMIC DNA]</scope>
    <source>
        <strain>ATCC 13385 / CBS 484.68 / DSM 40107 / JCM 4219 / NBRC 12761 / NRRL B-2901 / VKM Ac-621</strain>
    </source>
</reference>
<sequence length="86" mass="9189">MTTEVTQVTVEELATLMKKAAGVTVDPRDLERRANGFADFGLDSLGLLGIVGELENRYARALHRRGTCKSPRAFLDVVNGALASGA</sequence>
<organism>
    <name type="scientific">Streptomyces cyaneus</name>
    <name type="common">Streptomyces curacoi</name>
    <dbReference type="NCBI Taxonomy" id="1904"/>
    <lineage>
        <taxon>Bacteria</taxon>
        <taxon>Bacillati</taxon>
        <taxon>Actinomycetota</taxon>
        <taxon>Actinomycetes</taxon>
        <taxon>Kitasatosporales</taxon>
        <taxon>Streptomycetaceae</taxon>
        <taxon>Streptomyces</taxon>
    </lineage>
</organism>
<accession>Q02570</accession>
<evidence type="ECO:0000255" key="1">
    <source>
        <dbReference type="PROSITE-ProRule" id="PRU00258"/>
    </source>
</evidence>
<evidence type="ECO:0000305" key="2"/>
<dbReference type="EMBL" id="X62518">
    <property type="protein sequence ID" value="CAA44382.1"/>
    <property type="molecule type" value="Genomic_DNA"/>
</dbReference>
<dbReference type="PIR" id="JC1214">
    <property type="entry name" value="JC1214"/>
</dbReference>
<dbReference type="SMR" id="Q02570"/>
<dbReference type="UniPathway" id="UPA00176"/>
<dbReference type="GO" id="GO:0017000">
    <property type="term" value="P:antibiotic biosynthetic process"/>
    <property type="evidence" value="ECO:0007669"/>
    <property type="project" value="UniProtKB-KW"/>
</dbReference>
<dbReference type="Gene3D" id="1.10.1200.10">
    <property type="entry name" value="ACP-like"/>
    <property type="match status" value="1"/>
</dbReference>
<dbReference type="InterPro" id="IPR036736">
    <property type="entry name" value="ACP-like_sf"/>
</dbReference>
<dbReference type="InterPro" id="IPR009081">
    <property type="entry name" value="PP-bd_ACP"/>
</dbReference>
<dbReference type="InterPro" id="IPR006162">
    <property type="entry name" value="Ppantetheine_attach_site"/>
</dbReference>
<dbReference type="Pfam" id="PF00550">
    <property type="entry name" value="PP-binding"/>
    <property type="match status" value="1"/>
</dbReference>
<dbReference type="SUPFAM" id="SSF47336">
    <property type="entry name" value="ACP-like"/>
    <property type="match status" value="1"/>
</dbReference>
<dbReference type="PROSITE" id="PS50075">
    <property type="entry name" value="CARRIER"/>
    <property type="match status" value="1"/>
</dbReference>
<dbReference type="PROSITE" id="PS00012">
    <property type="entry name" value="PHOSPHOPANTETHEINE"/>
    <property type="match status" value="1"/>
</dbReference>
<keyword id="KW-0045">Antibiotic biosynthesis</keyword>
<keyword id="KW-0596">Phosphopantetheine</keyword>
<keyword id="KW-0597">Phosphoprotein</keyword>